<reference key="1">
    <citation type="journal article" date="1998" name="Nature">
        <title>Deciphering the biology of Mycobacterium tuberculosis from the complete genome sequence.</title>
        <authorList>
            <person name="Cole S.T."/>
            <person name="Brosch R."/>
            <person name="Parkhill J."/>
            <person name="Garnier T."/>
            <person name="Churcher C.M."/>
            <person name="Harris D.E."/>
            <person name="Gordon S.V."/>
            <person name="Eiglmeier K."/>
            <person name="Gas S."/>
            <person name="Barry C.E. III"/>
            <person name="Tekaia F."/>
            <person name="Badcock K."/>
            <person name="Basham D."/>
            <person name="Brown D."/>
            <person name="Chillingworth T."/>
            <person name="Connor R."/>
            <person name="Davies R.M."/>
            <person name="Devlin K."/>
            <person name="Feltwell T."/>
            <person name="Gentles S."/>
            <person name="Hamlin N."/>
            <person name="Holroyd S."/>
            <person name="Hornsby T."/>
            <person name="Jagels K."/>
            <person name="Krogh A."/>
            <person name="McLean J."/>
            <person name="Moule S."/>
            <person name="Murphy L.D."/>
            <person name="Oliver S."/>
            <person name="Osborne J."/>
            <person name="Quail M.A."/>
            <person name="Rajandream M.A."/>
            <person name="Rogers J."/>
            <person name="Rutter S."/>
            <person name="Seeger K."/>
            <person name="Skelton S."/>
            <person name="Squares S."/>
            <person name="Squares R."/>
            <person name="Sulston J.E."/>
            <person name="Taylor K."/>
            <person name="Whitehead S."/>
            <person name="Barrell B.G."/>
        </authorList>
    </citation>
    <scope>NUCLEOTIDE SEQUENCE [LARGE SCALE GENOMIC DNA]</scope>
    <source>
        <strain>ATCC 25618 / H37Rv</strain>
    </source>
</reference>
<proteinExistence type="inferred from homology"/>
<organism>
    <name type="scientific">Mycobacterium tuberculosis (strain ATCC 25618 / H37Rv)</name>
    <dbReference type="NCBI Taxonomy" id="83332"/>
    <lineage>
        <taxon>Bacteria</taxon>
        <taxon>Bacillati</taxon>
        <taxon>Actinomycetota</taxon>
        <taxon>Actinomycetes</taxon>
        <taxon>Mycobacteriales</taxon>
        <taxon>Mycobacteriaceae</taxon>
        <taxon>Mycobacterium</taxon>
        <taxon>Mycobacterium tuberculosis complex</taxon>
    </lineage>
</organism>
<dbReference type="EC" id="2.5.1.141" evidence="1"/>
<dbReference type="EMBL" id="AL123456">
    <property type="protein sequence ID" value="CCP44210.1"/>
    <property type="molecule type" value="Genomic_DNA"/>
</dbReference>
<dbReference type="PIR" id="F70917">
    <property type="entry name" value="F70917"/>
</dbReference>
<dbReference type="RefSeq" id="NP_215967.1">
    <property type="nucleotide sequence ID" value="NC_000962.3"/>
</dbReference>
<dbReference type="RefSeq" id="WP_003898882.1">
    <property type="nucleotide sequence ID" value="NZ_NVQJ01000104.1"/>
</dbReference>
<dbReference type="SMR" id="P9WFR7"/>
<dbReference type="FunCoup" id="P9WFR7">
    <property type="interactions" value="397"/>
</dbReference>
<dbReference type="STRING" id="83332.Rv1451"/>
<dbReference type="PaxDb" id="83332-Rv1451"/>
<dbReference type="GeneID" id="886666"/>
<dbReference type="KEGG" id="mtu:Rv1451"/>
<dbReference type="KEGG" id="mtv:RVBD_1451"/>
<dbReference type="TubercuList" id="Rv1451"/>
<dbReference type="eggNOG" id="COG0109">
    <property type="taxonomic scope" value="Bacteria"/>
</dbReference>
<dbReference type="InParanoid" id="P9WFR7"/>
<dbReference type="OrthoDB" id="9814417at2"/>
<dbReference type="PhylomeDB" id="P9WFR7"/>
<dbReference type="UniPathway" id="UPA00834">
    <property type="reaction ID" value="UER00712"/>
</dbReference>
<dbReference type="Proteomes" id="UP000001584">
    <property type="component" value="Chromosome"/>
</dbReference>
<dbReference type="GO" id="GO:0009274">
    <property type="term" value="C:peptidoglycan-based cell wall"/>
    <property type="evidence" value="ECO:0007005"/>
    <property type="project" value="MTBBASE"/>
</dbReference>
<dbReference type="GO" id="GO:0005886">
    <property type="term" value="C:plasma membrane"/>
    <property type="evidence" value="ECO:0007669"/>
    <property type="project" value="UniProtKB-SubCell"/>
</dbReference>
<dbReference type="GO" id="GO:0008495">
    <property type="term" value="F:protoheme IX farnesyltransferase activity"/>
    <property type="evidence" value="ECO:0000318"/>
    <property type="project" value="GO_Central"/>
</dbReference>
<dbReference type="GO" id="GO:0006783">
    <property type="term" value="P:heme biosynthetic process"/>
    <property type="evidence" value="ECO:0000318"/>
    <property type="project" value="GO_Central"/>
</dbReference>
<dbReference type="GO" id="GO:0048034">
    <property type="term" value="P:heme O biosynthetic process"/>
    <property type="evidence" value="ECO:0007669"/>
    <property type="project" value="UniProtKB-UniRule"/>
</dbReference>
<dbReference type="CDD" id="cd13957">
    <property type="entry name" value="PT_UbiA_Cox10"/>
    <property type="match status" value="1"/>
</dbReference>
<dbReference type="FunFam" id="1.10.357.140:FF:000001">
    <property type="entry name" value="Protoheme IX farnesyltransferase"/>
    <property type="match status" value="1"/>
</dbReference>
<dbReference type="Gene3D" id="1.10.357.140">
    <property type="entry name" value="UbiA prenyltransferase"/>
    <property type="match status" value="1"/>
</dbReference>
<dbReference type="HAMAP" id="MF_00154">
    <property type="entry name" value="CyoE_CtaB"/>
    <property type="match status" value="1"/>
</dbReference>
<dbReference type="InterPro" id="IPR006369">
    <property type="entry name" value="Protohaem_IX_farnesylTrfase"/>
</dbReference>
<dbReference type="InterPro" id="IPR000537">
    <property type="entry name" value="UbiA_prenyltransferase"/>
</dbReference>
<dbReference type="InterPro" id="IPR044878">
    <property type="entry name" value="UbiA_sf"/>
</dbReference>
<dbReference type="NCBIfam" id="TIGR01473">
    <property type="entry name" value="cyoE_ctaB"/>
    <property type="match status" value="1"/>
</dbReference>
<dbReference type="NCBIfam" id="NF003349">
    <property type="entry name" value="PRK04375.1-2"/>
    <property type="match status" value="1"/>
</dbReference>
<dbReference type="PANTHER" id="PTHR43448:SF7">
    <property type="entry name" value="4-HYDROXYBENZOATE SOLANESYLTRANSFERASE"/>
    <property type="match status" value="1"/>
</dbReference>
<dbReference type="PANTHER" id="PTHR43448">
    <property type="entry name" value="PROTOHEME IX FARNESYLTRANSFERASE, MITOCHONDRIAL"/>
    <property type="match status" value="1"/>
</dbReference>
<dbReference type="Pfam" id="PF01040">
    <property type="entry name" value="UbiA"/>
    <property type="match status" value="1"/>
</dbReference>
<feature type="chain" id="PRO_0000327090" description="Protoheme IX farnesyltransferase">
    <location>
        <begin position="1"/>
        <end position="308"/>
    </location>
</feature>
<feature type="transmembrane region" description="Helical" evidence="1">
    <location>
        <begin position="20"/>
        <end position="40"/>
    </location>
</feature>
<feature type="transmembrane region" description="Helical" evidence="1">
    <location>
        <begin position="50"/>
        <end position="70"/>
    </location>
</feature>
<feature type="transmembrane region" description="Helical" evidence="1">
    <location>
        <begin position="102"/>
        <end position="122"/>
    </location>
</feature>
<feature type="transmembrane region" description="Helical" evidence="1">
    <location>
        <begin position="124"/>
        <end position="144"/>
    </location>
</feature>
<feature type="transmembrane region" description="Helical" evidence="1">
    <location>
        <begin position="149"/>
        <end position="169"/>
    </location>
</feature>
<feature type="transmembrane region" description="Helical" evidence="1">
    <location>
        <begin position="170"/>
        <end position="190"/>
    </location>
</feature>
<feature type="transmembrane region" description="Helical" evidence="1">
    <location>
        <begin position="227"/>
        <end position="249"/>
    </location>
</feature>
<feature type="transmembrane region" description="Helical" evidence="1">
    <location>
        <begin position="288"/>
        <end position="308"/>
    </location>
</feature>
<protein>
    <recommendedName>
        <fullName evidence="1">Protoheme IX farnesyltransferase</fullName>
        <ecNumber evidence="1">2.5.1.141</ecNumber>
    </recommendedName>
    <alternativeName>
        <fullName evidence="1">Heme B farnesyltransferase</fullName>
    </alternativeName>
    <alternativeName>
        <fullName evidence="1">Heme O synthase</fullName>
    </alternativeName>
</protein>
<keyword id="KW-1003">Cell membrane</keyword>
<keyword id="KW-0350">Heme biosynthesis</keyword>
<keyword id="KW-0472">Membrane</keyword>
<keyword id="KW-1185">Reference proteome</keyword>
<keyword id="KW-0808">Transferase</keyword>
<keyword id="KW-0812">Transmembrane</keyword>
<keyword id="KW-1133">Transmembrane helix</keyword>
<evidence type="ECO:0000255" key="1">
    <source>
        <dbReference type="HAMAP-Rule" id="MF_00154"/>
    </source>
</evidence>
<gene>
    <name evidence="1" type="primary">ctaB</name>
    <name type="ordered locus">Rv1451</name>
</gene>
<sequence>MNVRGRVAPRRVTGRAMSTLLAYLALTKPRVIELLLVTAIPAMLLADRGAIHPLLMLNTLVGGMMAAAGANTLNCVADADIDKVMKRTARRPLAREAVPTRNALALGLTLTVISFFWLWCATNLLAGVLALVTVAFYVFVYTLWLKRRTSQNVVWGGAAGCMPVMIGWSAITGTIAWPALAMFAIIFFWTPPHTWALAMRYKQDYQVAGVPMLPAVATERQVTKQILIYTWLTVAATLVLALATSWLYGAVALVAGGWFLTMAHQLYAGVRAGEPVRPLRLFLQSNNYLAVVFCALAVDSVIALPTLH</sequence>
<name>COXX_MYCTU</name>
<accession>P9WFR7</accession>
<accession>L0T8A9</accession>
<accession>O06809</accession>
<accession>Q7D8F6</accession>
<comment type="function">
    <text evidence="1">Converts heme B (protoheme IX) to heme O by substitution of the vinyl group on carbon 2 of heme B porphyrin ring with a hydroxyethyl farnesyl side group.</text>
</comment>
<comment type="catalytic activity">
    <reaction evidence="1">
        <text>heme b + (2E,6E)-farnesyl diphosphate + H2O = Fe(II)-heme o + diphosphate</text>
        <dbReference type="Rhea" id="RHEA:28070"/>
        <dbReference type="ChEBI" id="CHEBI:15377"/>
        <dbReference type="ChEBI" id="CHEBI:33019"/>
        <dbReference type="ChEBI" id="CHEBI:60344"/>
        <dbReference type="ChEBI" id="CHEBI:60530"/>
        <dbReference type="ChEBI" id="CHEBI:175763"/>
        <dbReference type="EC" id="2.5.1.141"/>
    </reaction>
</comment>
<comment type="pathway">
    <text evidence="1">Porphyrin-containing compound metabolism; heme O biosynthesis; heme O from protoheme: step 1/1.</text>
</comment>
<comment type="subcellular location">
    <subcellularLocation>
        <location evidence="1">Cell membrane</location>
        <topology evidence="1">Multi-pass membrane protein</topology>
    </subcellularLocation>
</comment>
<comment type="miscellaneous">
    <text evidence="1">Carbon 2 of the heme B porphyrin ring is defined according to the Fischer nomenclature.</text>
</comment>
<comment type="similarity">
    <text evidence="1">Belongs to the UbiA prenyltransferase family. Protoheme IX farnesyltransferase subfamily.</text>
</comment>